<feature type="chain" id="PRO_0000279746" description="Uroporphyrinogen decarboxylase">
    <location>
        <begin position="1"/>
        <end position="367"/>
    </location>
</feature>
<feature type="binding site" evidence="1">
    <location>
        <position position="37"/>
    </location>
    <ligand>
        <name>coproporphyrinogen I</name>
        <dbReference type="ChEBI" id="CHEBI:62631"/>
    </ligand>
</feature>
<feature type="binding site" evidence="1">
    <location>
        <position position="37"/>
    </location>
    <ligand>
        <name>coproporphyrinogen III</name>
        <dbReference type="ChEBI" id="CHEBI:57309"/>
    </ligand>
</feature>
<feature type="binding site" evidence="1">
    <location>
        <position position="39"/>
    </location>
    <ligand>
        <name>coproporphyrinogen I</name>
        <dbReference type="ChEBI" id="CHEBI:62631"/>
    </ligand>
</feature>
<feature type="binding site" evidence="1">
    <location>
        <position position="39"/>
    </location>
    <ligand>
        <name>coproporphyrinogen III</name>
        <dbReference type="ChEBI" id="CHEBI:57309"/>
    </ligand>
</feature>
<feature type="binding site" evidence="1">
    <location>
        <position position="41"/>
    </location>
    <ligand>
        <name>coproporphyrinogen I</name>
        <dbReference type="ChEBI" id="CHEBI:62631"/>
    </ligand>
</feature>
<feature type="binding site" evidence="1">
    <location>
        <position position="41"/>
    </location>
    <ligand>
        <name>coproporphyrinogen III</name>
        <dbReference type="ChEBI" id="CHEBI:57309"/>
    </ligand>
</feature>
<feature type="binding site" evidence="1">
    <location>
        <position position="50"/>
    </location>
    <ligand>
        <name>coproporphyrinogen I</name>
        <dbReference type="ChEBI" id="CHEBI:62631"/>
    </ligand>
</feature>
<feature type="binding site" evidence="1">
    <location>
        <position position="86"/>
    </location>
    <ligand>
        <name>coproporphyrinogen I</name>
        <dbReference type="ChEBI" id="CHEBI:62631"/>
    </ligand>
</feature>
<feature type="binding site" evidence="1">
    <location>
        <position position="86"/>
    </location>
    <ligand>
        <name>coproporphyrinogen III</name>
        <dbReference type="ChEBI" id="CHEBI:57309"/>
    </ligand>
</feature>
<feature type="binding site" evidence="1">
    <location>
        <position position="164"/>
    </location>
    <ligand>
        <name>coproporphyrinogen I</name>
        <dbReference type="ChEBI" id="CHEBI:62631"/>
    </ligand>
</feature>
<feature type="binding site" evidence="1">
    <location>
        <position position="164"/>
    </location>
    <ligand>
        <name>coproporphyrinogen III</name>
        <dbReference type="ChEBI" id="CHEBI:57309"/>
    </ligand>
</feature>
<feature type="binding site" evidence="1">
    <location>
        <position position="219"/>
    </location>
    <ligand>
        <name>coproporphyrinogen I</name>
        <dbReference type="ChEBI" id="CHEBI:62631"/>
    </ligand>
</feature>
<feature type="binding site" evidence="1">
    <location>
        <position position="219"/>
    </location>
    <ligand>
        <name>coproporphyrinogen III</name>
        <dbReference type="ChEBI" id="CHEBI:57309"/>
    </ligand>
</feature>
<feature type="binding site" evidence="1">
    <location>
        <position position="339"/>
    </location>
    <ligand>
        <name>coproporphyrinogen I</name>
        <dbReference type="ChEBI" id="CHEBI:62631"/>
    </ligand>
</feature>
<feature type="binding site" evidence="1">
    <location>
        <position position="339"/>
    </location>
    <ligand>
        <name>coproporphyrinogen III</name>
        <dbReference type="ChEBI" id="CHEBI:57309"/>
    </ligand>
</feature>
<feature type="site" description="Transition state stabilizer" evidence="1">
    <location>
        <position position="86"/>
    </location>
</feature>
<feature type="modified residue" description="N-acetylmethionine" evidence="1">
    <location>
        <position position="1"/>
    </location>
</feature>
<feature type="sequence variant" description="In FCT." evidence="3">
    <original>L</original>
    <variation>P</variation>
    <location>
        <position position="131"/>
    </location>
</feature>
<dbReference type="EC" id="4.1.1.37" evidence="1"/>
<dbReference type="EMBL" id="AJ295031">
    <property type="protein sequence ID" value="CAC82649.1"/>
    <property type="molecule type" value="Genomic_DNA"/>
</dbReference>
<dbReference type="RefSeq" id="NP_001012341.1">
    <property type="nucleotide sequence ID" value="NM_001012341.1"/>
</dbReference>
<dbReference type="SMR" id="Q8HY31"/>
<dbReference type="STRING" id="9940.ENSOARP00000001535"/>
<dbReference type="PaxDb" id="9940-ENSOARP00000001535"/>
<dbReference type="Ensembl" id="ENSOART00215091592">
    <property type="protein sequence ID" value="ENSOARP00215049939"/>
    <property type="gene ID" value="ENSOARG00215054183"/>
</dbReference>
<dbReference type="Ensembl" id="ENSOART00220081266">
    <property type="protein sequence ID" value="ENSOARP00220043715"/>
    <property type="gene ID" value="ENSOARG00220048746"/>
</dbReference>
<dbReference type="GeneID" id="497117"/>
<dbReference type="KEGG" id="oas:497117"/>
<dbReference type="CTD" id="7389"/>
<dbReference type="eggNOG" id="KOG2872">
    <property type="taxonomic scope" value="Eukaryota"/>
</dbReference>
<dbReference type="HOGENOM" id="CLU_040933_0_0_1"/>
<dbReference type="OMA" id="LWLMRQA"/>
<dbReference type="OrthoDB" id="339900at2759"/>
<dbReference type="UniPathway" id="UPA00251">
    <property type="reaction ID" value="UER00321"/>
</dbReference>
<dbReference type="Proteomes" id="UP000002356">
    <property type="component" value="Chromosome 1"/>
</dbReference>
<dbReference type="Bgee" id="ENSOARG00000001472">
    <property type="expression patterns" value="Expressed in metanephros cortex and 52 other cell types or tissues"/>
</dbReference>
<dbReference type="GO" id="GO:0005829">
    <property type="term" value="C:cytosol"/>
    <property type="evidence" value="ECO:0007669"/>
    <property type="project" value="UniProtKB-SubCell"/>
</dbReference>
<dbReference type="GO" id="GO:0004853">
    <property type="term" value="F:uroporphyrinogen decarboxylase activity"/>
    <property type="evidence" value="ECO:0000250"/>
    <property type="project" value="UniProtKB"/>
</dbReference>
<dbReference type="GO" id="GO:0006787">
    <property type="term" value="P:porphyrin-containing compound catabolic process"/>
    <property type="evidence" value="ECO:0000250"/>
    <property type="project" value="UniProtKB"/>
</dbReference>
<dbReference type="GO" id="GO:0006782">
    <property type="term" value="P:protoporphyrinogen IX biosynthetic process"/>
    <property type="evidence" value="ECO:0007669"/>
    <property type="project" value="UniProtKB-UniPathway"/>
</dbReference>
<dbReference type="CDD" id="cd00717">
    <property type="entry name" value="URO-D"/>
    <property type="match status" value="1"/>
</dbReference>
<dbReference type="FunFam" id="3.20.20.210:FF:000008">
    <property type="entry name" value="Uroporphyrinogen decarboxylase"/>
    <property type="match status" value="1"/>
</dbReference>
<dbReference type="Gene3D" id="3.20.20.210">
    <property type="match status" value="1"/>
</dbReference>
<dbReference type="HAMAP" id="MF_00218">
    <property type="entry name" value="URO_D"/>
    <property type="match status" value="1"/>
</dbReference>
<dbReference type="InterPro" id="IPR038071">
    <property type="entry name" value="UROD/MetE-like_sf"/>
</dbReference>
<dbReference type="InterPro" id="IPR006361">
    <property type="entry name" value="Uroporphyrinogen_deCO2ase_HemE"/>
</dbReference>
<dbReference type="InterPro" id="IPR000257">
    <property type="entry name" value="Uroporphyrinogen_deCOase"/>
</dbReference>
<dbReference type="NCBIfam" id="TIGR01464">
    <property type="entry name" value="hemE"/>
    <property type="match status" value="1"/>
</dbReference>
<dbReference type="PANTHER" id="PTHR21091">
    <property type="entry name" value="METHYLTETRAHYDROFOLATE:HOMOCYSTEINE METHYLTRANSFERASE RELATED"/>
    <property type="match status" value="1"/>
</dbReference>
<dbReference type="PANTHER" id="PTHR21091:SF169">
    <property type="entry name" value="UROPORPHYRINOGEN DECARBOXYLASE"/>
    <property type="match status" value="1"/>
</dbReference>
<dbReference type="Pfam" id="PF01208">
    <property type="entry name" value="URO-D"/>
    <property type="match status" value="1"/>
</dbReference>
<dbReference type="SUPFAM" id="SSF51726">
    <property type="entry name" value="UROD/MetE-like"/>
    <property type="match status" value="1"/>
</dbReference>
<dbReference type="PROSITE" id="PS00906">
    <property type="entry name" value="UROD_1"/>
    <property type="match status" value="1"/>
</dbReference>
<dbReference type="PROSITE" id="PS00907">
    <property type="entry name" value="UROD_2"/>
    <property type="match status" value="1"/>
</dbReference>
<evidence type="ECO:0000250" key="1">
    <source>
        <dbReference type="UniProtKB" id="P06132"/>
    </source>
</evidence>
<evidence type="ECO:0000250" key="2">
    <source>
        <dbReference type="UniProtKB" id="P70697"/>
    </source>
</evidence>
<evidence type="ECO:0000269" key="3">
    <source>
    </source>
</evidence>
<evidence type="ECO:0000305" key="4"/>
<comment type="function">
    <text evidence="1">Catalyzes the sequential decarboxylation of the four acetate side chains of uroporphyrinogen to form coproporphyrinogen and participates in the fifth step in the heme biosynthetic pathway. Isomer I or isomer III of uroporphyrinogen may serve as substrate, but only coproporphyrinogen III can ultimately be converted to heme. In vitro also decarboxylates pentacarboxylate porphyrinogen I.</text>
</comment>
<comment type="catalytic activity">
    <reaction evidence="1">
        <text>uroporphyrinogen III + 4 H(+) = coproporphyrinogen III + 4 CO2</text>
        <dbReference type="Rhea" id="RHEA:19865"/>
        <dbReference type="ChEBI" id="CHEBI:15378"/>
        <dbReference type="ChEBI" id="CHEBI:16526"/>
        <dbReference type="ChEBI" id="CHEBI:57308"/>
        <dbReference type="ChEBI" id="CHEBI:57309"/>
        <dbReference type="EC" id="4.1.1.37"/>
    </reaction>
    <physiologicalReaction direction="left-to-right" evidence="1">
        <dbReference type="Rhea" id="RHEA:19866"/>
    </physiologicalReaction>
</comment>
<comment type="catalytic activity">
    <reaction evidence="1">
        <text>uroporphyrinogen I + 4 H(+) = coproporphyrinogen I + 4 CO2</text>
        <dbReference type="Rhea" id="RHEA:31239"/>
        <dbReference type="ChEBI" id="CHEBI:15378"/>
        <dbReference type="ChEBI" id="CHEBI:16526"/>
        <dbReference type="ChEBI" id="CHEBI:62626"/>
        <dbReference type="ChEBI" id="CHEBI:62631"/>
    </reaction>
    <physiologicalReaction direction="left-to-right" evidence="1">
        <dbReference type="Rhea" id="RHEA:31240"/>
    </physiologicalReaction>
</comment>
<comment type="pathway">
    <text evidence="1">Porphyrin-containing compound metabolism; protoporphyrin-IX biosynthesis; coproporphyrinogen-III from 5-aminolevulinate: step 4/4.</text>
</comment>
<comment type="subunit">
    <text evidence="1">Homodimer.</text>
</comment>
<comment type="subcellular location">
    <subcellularLocation>
        <location evidence="2">Cytoplasm</location>
        <location evidence="2">Cytosol</location>
    </subcellularLocation>
</comment>
<comment type="disease">
    <text>Defects in UROD are the cause of porphyria cutanea tarda (PCT). PCT has been identified in a flock of German Blackface sheep. It is characterized by photosensitivity and porphyrinuria.</text>
</comment>
<comment type="similarity">
    <text evidence="4">Belongs to the uroporphyrinogen decarboxylase family.</text>
</comment>
<gene>
    <name evidence="1" type="primary">UROD</name>
</gene>
<reference key="1">
    <citation type="journal article" date="2005" name="Anim. Genet.">
        <title>Identification of a mutation in the ovine uroporphyrinogen decarboxylase (UROD) gene associated with a type of porphyria.</title>
        <authorList>
            <person name="Nezamzadeh R."/>
            <person name="Seubert A."/>
            <person name="Pohlenz J."/>
            <person name="Brenig B."/>
        </authorList>
    </citation>
    <scope>NUCLEOTIDE SEQUENCE [GENOMIC DNA]</scope>
    <scope>VARIANT PCT PRO-131</scope>
</reference>
<name>DCUP_SHEEP</name>
<proteinExistence type="evidence at protein level"/>
<protein>
    <recommendedName>
        <fullName evidence="1">Uroporphyrinogen decarboxylase</fullName>
        <shortName>UPD</shortName>
        <shortName>URO-D</shortName>
        <ecNumber evidence="1">4.1.1.37</ecNumber>
    </recommendedName>
</protein>
<organism>
    <name type="scientific">Ovis aries</name>
    <name type="common">Sheep</name>
    <dbReference type="NCBI Taxonomy" id="9940"/>
    <lineage>
        <taxon>Eukaryota</taxon>
        <taxon>Metazoa</taxon>
        <taxon>Chordata</taxon>
        <taxon>Craniata</taxon>
        <taxon>Vertebrata</taxon>
        <taxon>Euteleostomi</taxon>
        <taxon>Mammalia</taxon>
        <taxon>Eutheria</taxon>
        <taxon>Laurasiatheria</taxon>
        <taxon>Artiodactyla</taxon>
        <taxon>Ruminantia</taxon>
        <taxon>Pecora</taxon>
        <taxon>Bovidae</taxon>
        <taxon>Caprinae</taxon>
        <taxon>Ovis</taxon>
    </lineage>
</organism>
<accession>Q8HY31</accession>
<keyword id="KW-0007">Acetylation</keyword>
<keyword id="KW-0963">Cytoplasm</keyword>
<keyword id="KW-0210">Decarboxylase</keyword>
<keyword id="KW-0225">Disease variant</keyword>
<keyword id="KW-0350">Heme biosynthesis</keyword>
<keyword id="KW-0456">Lyase</keyword>
<keyword id="KW-0627">Porphyrin biosynthesis</keyword>
<keyword id="KW-1185">Reference proteome</keyword>
<sequence length="367" mass="40812">MEAKESRPQGFPELKNDTFLRAAWGEETDYTPVWCMRQAGRYLPEFRETRAAQDFFSTCRSPEACCELTLQPLRRFPLDAAIIFSDILVVPQALGMEVTMVPGKGPSFPEPLREERDLERLRDPATVASELGYVFQAITLTRQQLAGRVPLIGFAGAPWTLMTYMVEGGGSSTMSQAKRWLYQRPQASHQLLRILTDALVPYLVGQVAAGAQALQLFESHAGHLGPQLFSKFALPYIRDVSKRVKAGLQEAGLAPVPMIIFAKDGHFALEELAQAGYEVVGLDWTVAPEKARERVGKTVTLQGNLDPCALYASEEEIGKLVQQMLNDFGPQRYIANLGHGLYPDMDPEHVGAFVDAVHKHSRLLRQN</sequence>